<comment type="similarity">
    <text evidence="1">Belongs to the UPF0235 family.</text>
</comment>
<gene>
    <name type="ordered locus">VC_0458</name>
</gene>
<accession>Q9KUQ7</accession>
<sequence length="96" mass="10404">MAAAWREGDDLLLRLYIQPKASRDSIVGLHGEELKVAITAPPIDGKANAHLSKYLAKLCKVAKGSVVVEKGELGRHKQVRILQPSQIPAEIAALIE</sequence>
<organism>
    <name type="scientific">Vibrio cholerae serotype O1 (strain ATCC 39315 / El Tor Inaba N16961)</name>
    <dbReference type="NCBI Taxonomy" id="243277"/>
    <lineage>
        <taxon>Bacteria</taxon>
        <taxon>Pseudomonadati</taxon>
        <taxon>Pseudomonadota</taxon>
        <taxon>Gammaproteobacteria</taxon>
        <taxon>Vibrionales</taxon>
        <taxon>Vibrionaceae</taxon>
        <taxon>Vibrio</taxon>
    </lineage>
</organism>
<protein>
    <recommendedName>
        <fullName evidence="1">UPF0235 protein VC_0458</fullName>
    </recommendedName>
</protein>
<reference key="1">
    <citation type="journal article" date="2000" name="Nature">
        <title>DNA sequence of both chromosomes of the cholera pathogen Vibrio cholerae.</title>
        <authorList>
            <person name="Heidelberg J.F."/>
            <person name="Eisen J.A."/>
            <person name="Nelson W.C."/>
            <person name="Clayton R.A."/>
            <person name="Gwinn M.L."/>
            <person name="Dodson R.J."/>
            <person name="Haft D.H."/>
            <person name="Hickey E.K."/>
            <person name="Peterson J.D."/>
            <person name="Umayam L.A."/>
            <person name="Gill S.R."/>
            <person name="Nelson K.E."/>
            <person name="Read T.D."/>
            <person name="Tettelin H."/>
            <person name="Richardson D.L."/>
            <person name="Ermolaeva M.D."/>
            <person name="Vamathevan J.J."/>
            <person name="Bass S."/>
            <person name="Qin H."/>
            <person name="Dragoi I."/>
            <person name="Sellers P."/>
            <person name="McDonald L.A."/>
            <person name="Utterback T.R."/>
            <person name="Fleischmann R.D."/>
            <person name="Nierman W.C."/>
            <person name="White O."/>
            <person name="Salzberg S.L."/>
            <person name="Smith H.O."/>
            <person name="Colwell R.R."/>
            <person name="Mekalanos J.J."/>
            <person name="Venter J.C."/>
            <person name="Fraser C.M."/>
        </authorList>
    </citation>
    <scope>NUCLEOTIDE SEQUENCE [LARGE SCALE GENOMIC DNA]</scope>
    <source>
        <strain>ATCC 39315 / El Tor Inaba N16961</strain>
    </source>
</reference>
<proteinExistence type="inferred from homology"/>
<evidence type="ECO:0000255" key="1">
    <source>
        <dbReference type="HAMAP-Rule" id="MF_00634"/>
    </source>
</evidence>
<keyword id="KW-1185">Reference proteome</keyword>
<dbReference type="EMBL" id="AE003852">
    <property type="protein sequence ID" value="AAF93631.1"/>
    <property type="molecule type" value="Genomic_DNA"/>
</dbReference>
<dbReference type="PIR" id="B82321">
    <property type="entry name" value="B82321"/>
</dbReference>
<dbReference type="RefSeq" id="NP_230112.1">
    <property type="nucleotide sequence ID" value="NC_002505.1"/>
</dbReference>
<dbReference type="SMR" id="Q9KUQ7"/>
<dbReference type="STRING" id="243277.VC_0458"/>
<dbReference type="DNASU" id="2615120"/>
<dbReference type="EnsemblBacteria" id="AAF93631">
    <property type="protein sequence ID" value="AAF93631"/>
    <property type="gene ID" value="VC_0458"/>
</dbReference>
<dbReference type="KEGG" id="vch:VC_0458"/>
<dbReference type="PATRIC" id="fig|243277.26.peg.431"/>
<dbReference type="eggNOG" id="COG1872">
    <property type="taxonomic scope" value="Bacteria"/>
</dbReference>
<dbReference type="HOGENOM" id="CLU_130694_5_0_6"/>
<dbReference type="Proteomes" id="UP000000584">
    <property type="component" value="Chromosome 1"/>
</dbReference>
<dbReference type="GO" id="GO:0005737">
    <property type="term" value="C:cytoplasm"/>
    <property type="evidence" value="ECO:0000318"/>
    <property type="project" value="GO_Central"/>
</dbReference>
<dbReference type="Gene3D" id="3.30.1200.10">
    <property type="entry name" value="YggU-like"/>
    <property type="match status" value="1"/>
</dbReference>
<dbReference type="HAMAP" id="MF_00634">
    <property type="entry name" value="UPF0235"/>
    <property type="match status" value="1"/>
</dbReference>
<dbReference type="InterPro" id="IPR003746">
    <property type="entry name" value="DUF167"/>
</dbReference>
<dbReference type="InterPro" id="IPR036591">
    <property type="entry name" value="YggU-like_sf"/>
</dbReference>
<dbReference type="NCBIfam" id="TIGR00251">
    <property type="entry name" value="DUF167 family protein"/>
    <property type="match status" value="1"/>
</dbReference>
<dbReference type="NCBIfam" id="NF003466">
    <property type="entry name" value="PRK05090.1"/>
    <property type="match status" value="1"/>
</dbReference>
<dbReference type="PANTHER" id="PTHR13420">
    <property type="entry name" value="UPF0235 PROTEIN C15ORF40"/>
    <property type="match status" value="1"/>
</dbReference>
<dbReference type="PANTHER" id="PTHR13420:SF7">
    <property type="entry name" value="UPF0235 PROTEIN C15ORF40"/>
    <property type="match status" value="1"/>
</dbReference>
<dbReference type="Pfam" id="PF02594">
    <property type="entry name" value="DUF167"/>
    <property type="match status" value="1"/>
</dbReference>
<dbReference type="SMART" id="SM01152">
    <property type="entry name" value="DUF167"/>
    <property type="match status" value="1"/>
</dbReference>
<dbReference type="SUPFAM" id="SSF69786">
    <property type="entry name" value="YggU-like"/>
    <property type="match status" value="1"/>
</dbReference>
<feature type="chain" id="PRO_0000139460" description="UPF0235 protein VC_0458">
    <location>
        <begin position="1"/>
        <end position="96"/>
    </location>
</feature>
<name>Y458_VIBCH</name>